<reference key="1">
    <citation type="journal article" date="1990" name="Cell">
        <title>ELFT: a gene that directs the expression of an ELAM-1 ligand.</title>
        <authorList>
            <person name="Goelz S.E."/>
            <person name="Hession C."/>
            <person name="Goff D."/>
            <person name="Griffiths B."/>
            <person name="Tizard R."/>
            <person name="Newman B."/>
            <person name="Chi-Rosso G."/>
            <person name="Lobb R."/>
        </authorList>
    </citation>
    <scope>NUCLEOTIDE SEQUENCE [MRNA] (ISOFORMS LONG AND SHORT)</scope>
    <scope>FUNCTION (ISOFORM SHORT)</scope>
</reference>
<reference key="2">
    <citation type="journal article" date="1991" name="J. Biol. Chem.">
        <title>Molecular cloning of a human fucosyltransferase gene that determines expression of the Lewis x and VIM-2 epitopes but not ELAM-1-dependent cell adhesion.</title>
        <authorList>
            <person name="Lowe J.B."/>
            <person name="Kukowska-Latallo J.F."/>
            <person name="Nair R.P."/>
            <person name="Larsen R.D."/>
            <person name="Marks R.M."/>
            <person name="Macher B.A."/>
            <person name="Kelly R.J."/>
            <person name="Ernst L.K."/>
        </authorList>
    </citation>
    <scope>NUCLEOTIDE SEQUENCE [GENOMIC DNA]</scope>
    <scope>FUNCTION (ISOFORM SHORT)</scope>
    <scope>CATALYTIC ACTIVITY (ISOFORM SHORT)</scope>
    <source>
        <tissue>Peripheral blood leukocyte</tissue>
    </source>
</reference>
<reference key="3">
    <citation type="journal article" date="2006" name="Nature">
        <title>Human chromosome 11 DNA sequence and analysis including novel gene identification.</title>
        <authorList>
            <person name="Taylor T.D."/>
            <person name="Noguchi H."/>
            <person name="Totoki Y."/>
            <person name="Toyoda A."/>
            <person name="Kuroki Y."/>
            <person name="Dewar K."/>
            <person name="Lloyd C."/>
            <person name="Itoh T."/>
            <person name="Takeda T."/>
            <person name="Kim D.-W."/>
            <person name="She X."/>
            <person name="Barlow K.F."/>
            <person name="Bloom T."/>
            <person name="Bruford E."/>
            <person name="Chang J.L."/>
            <person name="Cuomo C.A."/>
            <person name="Eichler E."/>
            <person name="FitzGerald M.G."/>
            <person name="Jaffe D.B."/>
            <person name="LaButti K."/>
            <person name="Nicol R."/>
            <person name="Park H.-S."/>
            <person name="Seaman C."/>
            <person name="Sougnez C."/>
            <person name="Yang X."/>
            <person name="Zimmer A.R."/>
            <person name="Zody M.C."/>
            <person name="Birren B.W."/>
            <person name="Nusbaum C."/>
            <person name="Fujiyama A."/>
            <person name="Hattori M."/>
            <person name="Rogers J."/>
            <person name="Lander E.S."/>
            <person name="Sakaki Y."/>
        </authorList>
    </citation>
    <scope>NUCLEOTIDE SEQUENCE [LARGE SCALE GENOMIC DNA]</scope>
</reference>
<reference key="4">
    <citation type="submission" date="2005-07" db="EMBL/GenBank/DDBJ databases">
        <authorList>
            <person name="Mural R.J."/>
            <person name="Istrail S."/>
            <person name="Sutton G.G."/>
            <person name="Florea L."/>
            <person name="Halpern A.L."/>
            <person name="Mobarry C.M."/>
            <person name="Lippert R."/>
            <person name="Walenz B."/>
            <person name="Shatkay H."/>
            <person name="Dew I."/>
            <person name="Miller J.R."/>
            <person name="Flanigan M.J."/>
            <person name="Edwards N.J."/>
            <person name="Bolanos R."/>
            <person name="Fasulo D."/>
            <person name="Halldorsson B.V."/>
            <person name="Hannenhalli S."/>
            <person name="Turner R."/>
            <person name="Yooseph S."/>
            <person name="Lu F."/>
            <person name="Nusskern D.R."/>
            <person name="Shue B.C."/>
            <person name="Zheng X.H."/>
            <person name="Zhong F."/>
            <person name="Delcher A.L."/>
            <person name="Huson D.H."/>
            <person name="Kravitz S.A."/>
            <person name="Mouchard L."/>
            <person name="Reinert K."/>
            <person name="Remington K.A."/>
            <person name="Clark A.G."/>
            <person name="Waterman M.S."/>
            <person name="Eichler E.E."/>
            <person name="Adams M.D."/>
            <person name="Hunkapiller M.W."/>
            <person name="Myers E.W."/>
            <person name="Venter J.C."/>
        </authorList>
    </citation>
    <scope>NUCLEOTIDE SEQUENCE [LARGE SCALE GENOMIC DNA]</scope>
</reference>
<reference key="5">
    <citation type="journal article" date="2004" name="Genome Res.">
        <title>The status, quality, and expansion of the NIH full-length cDNA project: the Mammalian Gene Collection (MGC).</title>
        <authorList>
            <consortium name="The MGC Project Team"/>
        </authorList>
    </citation>
    <scope>NUCLEOTIDE SEQUENCE [LARGE SCALE MRNA]</scope>
    <source>
        <tissue>Testis</tissue>
    </source>
</reference>
<reference key="6">
    <citation type="journal article" date="1991" name="J. Biol. Chem.">
        <title>Cloning of a human alpha(1,3)-fucosyltransferase gene that encodes ELFT but does not confer ELAM-1 recognition on Chinese hamster ovary cell transfectants.</title>
        <authorList>
            <person name="Kumar R."/>
            <person name="Potvin B."/>
            <person name="Muller W.A."/>
            <person name="Stanley P."/>
        </authorList>
    </citation>
    <scope>NUCLEOTIDE SEQUENCE [GENOMIC DNA] OF 126-525</scope>
</reference>
<reference key="7">
    <citation type="journal article" date="2001" name="J. Biol. Chem.">
        <title>CD15 expression in mature granulocytes is determined by alpha 1,3-fucosyltransferase IX, but in promyelocytes and monocytes by alpha 1,3-fucosyltransferase IV.</title>
        <authorList>
            <person name="Nakayama F."/>
            <person name="Nishihara S."/>
            <person name="Iwasaki H."/>
            <person name="Kudo T."/>
            <person name="Okubo R."/>
            <person name="Kaneko M."/>
            <person name="Nakamura M."/>
            <person name="Karube M."/>
            <person name="Sasaki K."/>
            <person name="Narimatsu H."/>
        </authorList>
    </citation>
    <scope>FUNCTION (ISOFORM SHORT)</scope>
    <scope>CATALYTIC ACTIVITY (ISOFORM SHORT)</scope>
    <scope>TISSUE SPECIFICITY</scope>
</reference>
<reference key="8">
    <citation type="journal article" date="2018" name="J. Biol. Chem.">
        <title>Distinct human alpha(1,3)-fucosyltransferases drive Lewis-X/sialyl Lewis-X assembly in human cells.</title>
        <authorList>
            <person name="Mondal N."/>
            <person name="Dykstra B."/>
            <person name="Lee J."/>
            <person name="Ashline D.J."/>
            <person name="Reinhold V.N."/>
            <person name="Rossi D.J."/>
            <person name="Sackstein R."/>
        </authorList>
    </citation>
    <scope>FUNCTION (ISOFORMS LONG AND SHORT)</scope>
    <scope>CATALYTIC ACTIVITY (ISOFORM SHORT)</scope>
    <scope>PATHWAY (ISOFORM SHORT)</scope>
    <scope>TISSUE SPECIFICITY (ISOFORM SHORT)</scope>
</reference>
<gene>
    <name evidence="9" type="primary">FUT4</name>
    <name evidence="8" type="synonym">ELFT</name>
    <name type="synonym">FCT3A</name>
</gene>
<sequence>MRRLWGAARKPSGAGWEKEWAEAPQEAPGAWSGRLGPGRSGRKGRAVPGWASWPAHLALAARPARHLGGAGQGPRPLHSGTAPFHSRASGERQRRLEPQLQHESRCRSSTPADAWRAEAALPVRAMGAPWGSPTAAAGGRRGWRRGRGLPWTVCVLAAAGLTCTALITYACWGQLPPLPWASPTPSRPVGVLLWWEPFGGRDSAPRPPPDCRLRFNISGCRLLTDRASYGEAQAVLFHHRDLVKGPPDWPPPWGIQAHTAEEVDLRVLDYEEAAAAAEALATSSPRPPGQRWVWMNFESPSHSPGLRSLASNLFNWTLSYRADSDVFVPYGYLYPRSHPGDPPSGLAPPLSRKQGLVAWVVSHWDERQARVRYYHQLSQHVTVDVFGRGGPGQPVPEIGLLHTVARYKFYLAFENSQHLDYITEKLWRNALLAGAVPVVLGPDRANYERFVPRGAFIHVDDFPSASSLASYLLFLDRNPAVYRRYFHWRRSYAVHITSFWDEPWCRVCQAVQRAGDRPKSIRNLASWFER</sequence>
<protein>
    <recommendedName>
        <fullName>Alpha-(1,3)-fucosyltransferase 4</fullName>
    </recommendedName>
    <alternativeName>
        <fullName>4-galactosyl-N-acetylglucosaminide 3-alpha-L-fucosyltransferase</fullName>
        <ecNumber evidence="6 7">2.4.1.152</ecNumber>
    </alternativeName>
    <alternativeName>
        <fullName evidence="8">ELAM-1 ligand fucosyltransferase</fullName>
    </alternativeName>
    <alternativeName>
        <fullName>Fucosyltransferase 4</fullName>
    </alternativeName>
    <alternativeName>
        <fullName>Fucosyltransferase IV</fullName>
        <shortName>Fuc-TIV</shortName>
        <shortName>FucT-IV</shortName>
    </alternativeName>
    <alternativeName>
        <fullName>Galactoside 3-L-fucosyltransferase</fullName>
    </alternativeName>
</protein>
<comment type="function">
    <molecule>Isoform Short</molecule>
    <text evidence="1 5 6 7">Catalyzes alpha(1-&gt;3) linkage of fucosyl moiety transferred from GDP-beta-L-fucose to N-acetyl glucosamine (GlcNAc) within type 2 lactosamine (LacNAc, Gal-beta(1-&gt;4)GlcNAc) glycan attached to N- or O-linked glycoproteins (PubMed:1702034, PubMed:1716630, PubMed:29593094). Robustly fucosylates nonsialylated distal LacNAc unit of the polylactosamine chain to form Lewis X antigen (CD15), a glycan determinant known to mediate important cellular functions in development and immunity. Fucosylates with lower efficiency sialylated LacNAc acceptors to form sialyl Lewis X and 6-sulfo sialyl Lewis X determinants that serve as recognition epitopes for C-type lectins (PubMed:1716630, PubMed:29593094). Together with FUT7 contributes to SELE, SELL and SELP selectin ligand biosynthesis and selectin-dependent lymphocyte homing, leukocyte migration and blood leukocyte homeostasis (By similarity). In a cell type specific manner, may also fucosylate the internal LacNAc unit of the polylactosamine chain to form VIM-2 antigen that serves as recognition epitope for SELE (PubMed:11278338, PubMed:1716630).</text>
</comment>
<comment type="function">
    <molecule>Isoform Long</molecule>
    <text evidence="7">Does not generate Lewis X antigens.</text>
</comment>
<comment type="catalytic activity">
    <molecule>Isoform Short</molecule>
    <reaction evidence="6 7">
        <text>a beta-D-galactosyl-(1-&gt;4)-N-acetyl-beta-D-glucosaminyl derivative + GDP-beta-L-fucose = a beta-D-galactosyl-(1-&gt;4)-[alpha-L-fucosyl-(1-&gt;3)]-N-acetyl-beta-D-glucosaminyl derivative + GDP + H(+)</text>
        <dbReference type="Rhea" id="RHEA:14257"/>
        <dbReference type="ChEBI" id="CHEBI:15378"/>
        <dbReference type="ChEBI" id="CHEBI:57273"/>
        <dbReference type="ChEBI" id="CHEBI:58189"/>
        <dbReference type="ChEBI" id="CHEBI:133507"/>
        <dbReference type="ChEBI" id="CHEBI:137941"/>
        <dbReference type="EC" id="2.4.1.152"/>
    </reaction>
    <physiologicalReaction direction="left-to-right" evidence="6">
        <dbReference type="Rhea" id="RHEA:14258"/>
    </physiologicalReaction>
</comment>
<comment type="catalytic activity">
    <molecule>Isoform Short</molecule>
    <reaction evidence="7">
        <text>an N-acetyl-alpha-neuraminyl-(2-&gt;3)-beta-D-galactosyl-(1-&gt;4)-N-acetyl-beta-D-glucosaminyl derivative + GDP-beta-L-fucose = an alpha-Neu5Ac-(2-&gt;3)-beta-D-Gal-(1-&gt;4)-[alpha-L-Fuc-(1-&gt;3)]-beta-D-GlcNAc derivative + GDP + H(+)</text>
        <dbReference type="Rhea" id="RHEA:56076"/>
        <dbReference type="ChEBI" id="CHEBI:15378"/>
        <dbReference type="ChEBI" id="CHEBI:57273"/>
        <dbReference type="ChEBI" id="CHEBI:58189"/>
        <dbReference type="ChEBI" id="CHEBI:136545"/>
        <dbReference type="ChEBI" id="CHEBI:139509"/>
    </reaction>
    <physiologicalReaction direction="left-to-right" evidence="7">
        <dbReference type="Rhea" id="RHEA:56077"/>
    </physiologicalReaction>
</comment>
<comment type="catalytic activity">
    <molecule>Isoform Short</molecule>
    <reaction evidence="4 6">
        <text>an alpha-Neu5Ac-(2-&gt;3)-beta-D-Gal-(1-&gt;4)-beta-D-GlcNAc-(1-&gt;3)-beta-D-Gal-(1-&gt;4)-beta-D-GlcNAc derivative + GDP-beta-L-fucose = an alpha-Neu5Ac-(2-&gt;3)-beta-D-Gal-(1-&gt;4)-beta-D-GlcNAc-(1-&gt;3)-beta-D-Gal-(1-&gt;4)-[alpha-L-Fuc-(1-&gt;3)]-beta-D-GlcNAc derivative + GDP + H(+)</text>
        <dbReference type="Rhea" id="RHEA:68044"/>
        <dbReference type="ChEBI" id="CHEBI:15378"/>
        <dbReference type="ChEBI" id="CHEBI:57273"/>
        <dbReference type="ChEBI" id="CHEBI:58189"/>
        <dbReference type="ChEBI" id="CHEBI:145343"/>
        <dbReference type="ChEBI" id="CHEBI:176900"/>
    </reaction>
    <physiologicalReaction direction="left-to-right" evidence="11 12">
        <dbReference type="Rhea" id="RHEA:68045"/>
    </physiologicalReaction>
</comment>
<comment type="catalytic activity">
    <reaction evidence="1">
        <text>an alpha-Neu5Ac-(2-&gt;3)-beta-D-Gal-(1-&gt;4)-beta-D-GlcNAc6S derivative + GDP-beta-L-fucose = an alpha-Neu5Ac-(2-&gt;3)-beta-D-Gal-(1-&gt;4)-[alpha-L-Fuc-(1-&gt;3)]-beta-D-GlcNAc6S derivative + GDP + H(+)</text>
        <dbReference type="Rhea" id="RHEA:62004"/>
        <dbReference type="ChEBI" id="CHEBI:15378"/>
        <dbReference type="ChEBI" id="CHEBI:57273"/>
        <dbReference type="ChEBI" id="CHEBI:58189"/>
        <dbReference type="ChEBI" id="CHEBI:145344"/>
        <dbReference type="ChEBI" id="CHEBI:145345"/>
    </reaction>
    <physiologicalReaction direction="left-to-right" evidence="1">
        <dbReference type="Rhea" id="RHEA:62005"/>
    </physiologicalReaction>
</comment>
<comment type="pathway">
    <molecule>Isoform Short</molecule>
    <text evidence="7">Protein modification; protein glycosylation.</text>
</comment>
<comment type="subcellular location">
    <subcellularLocation>
        <location>Golgi apparatus</location>
        <location>Golgi stack membrane</location>
        <topology>Single-pass type II membrane protein</topology>
    </subcellularLocation>
    <text>Membrane-bound form in trans cisternae of Golgi.</text>
</comment>
<comment type="alternative products">
    <event type="alternative initiation"/>
    <isoform>
        <id>P22083-1</id>
        <name evidence="9">Long</name>
        <name evidence="8">ELFT-L</name>
        <sequence type="displayed"/>
    </isoform>
    <isoform>
        <id>P22083-2</id>
        <name evidence="9">Short</name>
        <name evidence="8">ELFT</name>
        <sequence type="described" ref="VSP_061247"/>
    </isoform>
</comment>
<comment type="tissue specificity">
    <molecule>Isoform Short</molecule>
    <text evidence="7">Expressed at low levels in bone marrow-derived mesenchymal stem cells.</text>
</comment>
<comment type="tissue specificity">
    <text evidence="4">Expressed in cord blood immature promyelocytes and in peripheral blood myeloid and lymphoid cell populations.</text>
</comment>
<comment type="similarity">
    <text evidence="10">Belongs to the glycosyltransferase 10 family.</text>
</comment>
<comment type="sequence caution" evidence="10">
    <conflict type="frameshift">
        <sequence resource="EMBL-CDS" id="AAB20349"/>
    </conflict>
</comment>
<comment type="online information" name="Functional Glycomics Gateway - GTase">
    <link uri="http://www.functionalglycomics.org/glycomics/molecule/jsp/glycoEnzyme/viewGlycoEnzyme.jsp?gbpId=gt_hum_601"/>
    <text>Fucosyltransferase 4</text>
</comment>
<name>FUT4_HUMAN</name>
<evidence type="ECO:0000250" key="1">
    <source>
        <dbReference type="UniProtKB" id="Q11127"/>
    </source>
</evidence>
<evidence type="ECO:0000255" key="2"/>
<evidence type="ECO:0000256" key="3">
    <source>
        <dbReference type="SAM" id="MobiDB-lite"/>
    </source>
</evidence>
<evidence type="ECO:0000269" key="4">
    <source>
    </source>
</evidence>
<evidence type="ECO:0000269" key="5">
    <source>
    </source>
</evidence>
<evidence type="ECO:0000269" key="6">
    <source>
    </source>
</evidence>
<evidence type="ECO:0000269" key="7">
    <source>
    </source>
</evidence>
<evidence type="ECO:0000303" key="8">
    <source>
    </source>
</evidence>
<evidence type="ECO:0000303" key="9">
    <source>
    </source>
</evidence>
<evidence type="ECO:0000305" key="10"/>
<evidence type="ECO:0000305" key="11">
    <source>
    </source>
</evidence>
<evidence type="ECO:0000305" key="12">
    <source>
    </source>
</evidence>
<keyword id="KW-0024">Alternative initiation</keyword>
<keyword id="KW-0325">Glycoprotein</keyword>
<keyword id="KW-0328">Glycosyltransferase</keyword>
<keyword id="KW-0333">Golgi apparatus</keyword>
<keyword id="KW-0395">Inflammatory response</keyword>
<keyword id="KW-0472">Membrane</keyword>
<keyword id="KW-1267">Proteomics identification</keyword>
<keyword id="KW-1185">Reference proteome</keyword>
<keyword id="KW-0735">Signal-anchor</keyword>
<keyword id="KW-0808">Transferase</keyword>
<keyword id="KW-0812">Transmembrane</keyword>
<keyword id="KW-1133">Transmembrane helix</keyword>
<dbReference type="EC" id="2.4.1.152" evidence="6 7"/>
<dbReference type="EMBL" id="M58596">
    <property type="protein sequence ID" value="AAA63172.1"/>
    <property type="molecule type" value="mRNA"/>
</dbReference>
<dbReference type="EMBL" id="M58597">
    <property type="protein sequence ID" value="AAA63173.1"/>
    <property type="molecule type" value="mRNA"/>
</dbReference>
<dbReference type="EMBL" id="M65030">
    <property type="protein sequence ID" value="AAA92977.1"/>
    <property type="molecule type" value="Genomic_DNA"/>
</dbReference>
<dbReference type="EMBL" id="AP000943">
    <property type="status" value="NOT_ANNOTATED_CDS"/>
    <property type="molecule type" value="Genomic_DNA"/>
</dbReference>
<dbReference type="EMBL" id="CH471065">
    <property type="protein sequence ID" value="EAW66938.1"/>
    <property type="molecule type" value="Genomic_DNA"/>
</dbReference>
<dbReference type="EMBL" id="BC136373">
    <property type="protein sequence ID" value="AAI36374.1"/>
    <property type="molecule type" value="mRNA"/>
</dbReference>
<dbReference type="EMBL" id="BC136374">
    <property type="protein sequence ID" value="AAI36375.1"/>
    <property type="molecule type" value="mRNA"/>
</dbReference>
<dbReference type="EMBL" id="S65161">
    <property type="protein sequence ID" value="AAB20349.1"/>
    <property type="status" value="ALT_SEQ"/>
    <property type="molecule type" value="Genomic_DNA"/>
</dbReference>
<dbReference type="CCDS" id="CCDS8301.1">
    <molecule id="P22083-1"/>
</dbReference>
<dbReference type="PIR" id="B36340">
    <property type="entry name" value="B36340"/>
</dbReference>
<dbReference type="RefSeq" id="NP_002024.1">
    <molecule id="P22083-1"/>
    <property type="nucleotide sequence ID" value="NM_002033.4"/>
</dbReference>
<dbReference type="SMR" id="P22083"/>
<dbReference type="BioGRID" id="108802">
    <property type="interactions" value="9"/>
</dbReference>
<dbReference type="FunCoup" id="P22083">
    <property type="interactions" value="1170"/>
</dbReference>
<dbReference type="IntAct" id="P22083">
    <property type="interactions" value="8"/>
</dbReference>
<dbReference type="MINT" id="P22083"/>
<dbReference type="STRING" id="9606.ENSP00000351602"/>
<dbReference type="ChEMBL" id="CHEMBL4996"/>
<dbReference type="CAZy" id="GT10">
    <property type="family name" value="Glycosyltransferase Family 10"/>
</dbReference>
<dbReference type="GlyCosmos" id="P22083">
    <property type="glycosylation" value="2 sites, No reported glycans"/>
</dbReference>
<dbReference type="GlyGen" id="P22083">
    <property type="glycosylation" value="6 sites, 2 N-linked glycans (2 sites), 1 O-linked glycan (4 sites)"/>
</dbReference>
<dbReference type="iPTMnet" id="P22083"/>
<dbReference type="PhosphoSitePlus" id="P22083"/>
<dbReference type="BioMuta" id="FUT4"/>
<dbReference type="DMDM" id="226694189"/>
<dbReference type="jPOST" id="P22083"/>
<dbReference type="MassIVE" id="P22083"/>
<dbReference type="PaxDb" id="9606-ENSP00000351602"/>
<dbReference type="PeptideAtlas" id="P22083"/>
<dbReference type="ProteomicsDB" id="53958"/>
<dbReference type="Antibodypedia" id="3496">
    <property type="antibodies" value="2082 antibodies from 47 providers"/>
</dbReference>
<dbReference type="DNASU" id="2526"/>
<dbReference type="Ensembl" id="ENST00000358752.4">
    <molecule id="P22083-1"/>
    <property type="protein sequence ID" value="ENSP00000351602.2"/>
    <property type="gene ID" value="ENSG00000196371.4"/>
</dbReference>
<dbReference type="GeneID" id="2526"/>
<dbReference type="KEGG" id="hsa:2526"/>
<dbReference type="MANE-Select" id="ENST00000358752.4">
    <property type="protein sequence ID" value="ENSP00000351602.2"/>
    <property type="RefSeq nucleotide sequence ID" value="NM_002033.4"/>
    <property type="RefSeq protein sequence ID" value="NP_002024.1"/>
</dbReference>
<dbReference type="UCSC" id="uc001pez.4">
    <molecule id="P22083-1"/>
    <property type="organism name" value="human"/>
</dbReference>
<dbReference type="AGR" id="HGNC:4015"/>
<dbReference type="CTD" id="2526"/>
<dbReference type="DisGeNET" id="2526"/>
<dbReference type="GeneCards" id="FUT4"/>
<dbReference type="HGNC" id="HGNC:4015">
    <property type="gene designation" value="FUT4"/>
</dbReference>
<dbReference type="HPA" id="ENSG00000196371">
    <property type="expression patterns" value="Tissue enriched (bone)"/>
</dbReference>
<dbReference type="MIM" id="104230">
    <property type="type" value="gene"/>
</dbReference>
<dbReference type="neXtProt" id="NX_P22083"/>
<dbReference type="OpenTargets" id="ENSG00000196371"/>
<dbReference type="PharmGKB" id="PA28431"/>
<dbReference type="VEuPathDB" id="HostDB:ENSG00000196371"/>
<dbReference type="eggNOG" id="KOG2619">
    <property type="taxonomic scope" value="Eukaryota"/>
</dbReference>
<dbReference type="GeneTree" id="ENSGT00940000162506"/>
<dbReference type="HOGENOM" id="CLU_032075_4_0_1"/>
<dbReference type="InParanoid" id="P22083"/>
<dbReference type="OMA" id="QLWVWMN"/>
<dbReference type="OrthoDB" id="427096at2759"/>
<dbReference type="PAN-GO" id="P22083">
    <property type="GO annotations" value="2 GO annotations based on evolutionary models"/>
</dbReference>
<dbReference type="PhylomeDB" id="P22083"/>
<dbReference type="TreeFam" id="TF316348"/>
<dbReference type="BioCyc" id="MetaCyc:HS07593-MONOMER"/>
<dbReference type="BRENDA" id="2.4.1.152">
    <property type="organism ID" value="2681"/>
</dbReference>
<dbReference type="PathwayCommons" id="P22083"/>
<dbReference type="Reactome" id="R-HSA-9037629">
    <property type="pathway name" value="Lewis blood group biosynthesis"/>
</dbReference>
<dbReference type="SignaLink" id="P22083"/>
<dbReference type="UniPathway" id="UPA00378"/>
<dbReference type="BioGRID-ORCS" id="2526">
    <property type="hits" value="26 hits in 1171 CRISPR screens"/>
</dbReference>
<dbReference type="GenomeRNAi" id="2526"/>
<dbReference type="Pharos" id="P22083">
    <property type="development level" value="Tbio"/>
</dbReference>
<dbReference type="PRO" id="PR:P22083"/>
<dbReference type="Proteomes" id="UP000005640">
    <property type="component" value="Chromosome 11"/>
</dbReference>
<dbReference type="RNAct" id="P22083">
    <property type="molecule type" value="protein"/>
</dbReference>
<dbReference type="Bgee" id="ENSG00000196371">
    <property type="expression patterns" value="Expressed in mucosa of sigmoid colon and 141 other cell types or tissues"/>
</dbReference>
<dbReference type="GO" id="GO:0071944">
    <property type="term" value="C:cell periphery"/>
    <property type="evidence" value="ECO:0007669"/>
    <property type="project" value="Ensembl"/>
</dbReference>
<dbReference type="GO" id="GO:0009986">
    <property type="term" value="C:cell surface"/>
    <property type="evidence" value="ECO:0007669"/>
    <property type="project" value="Ensembl"/>
</dbReference>
<dbReference type="GO" id="GO:0005794">
    <property type="term" value="C:Golgi apparatus"/>
    <property type="evidence" value="ECO:0000304"/>
    <property type="project" value="UniProtKB"/>
</dbReference>
<dbReference type="GO" id="GO:0032580">
    <property type="term" value="C:Golgi cisterna membrane"/>
    <property type="evidence" value="ECO:0007669"/>
    <property type="project" value="UniProtKB-SubCell"/>
</dbReference>
<dbReference type="GO" id="GO:0000139">
    <property type="term" value="C:Golgi membrane"/>
    <property type="evidence" value="ECO:0000304"/>
    <property type="project" value="Reactome"/>
</dbReference>
<dbReference type="GO" id="GO:0016020">
    <property type="term" value="C:membrane"/>
    <property type="evidence" value="ECO:0000304"/>
    <property type="project" value="ProtInc"/>
</dbReference>
<dbReference type="GO" id="GO:0005802">
    <property type="term" value="C:trans-Golgi network"/>
    <property type="evidence" value="ECO:0000314"/>
    <property type="project" value="UniProtKB"/>
</dbReference>
<dbReference type="GO" id="GO:0017083">
    <property type="term" value="F:4-galactosyl-N-acetylglucosaminide 3-alpha-L-fucosyltransferase activity"/>
    <property type="evidence" value="ECO:0000314"/>
    <property type="project" value="UniProtKB"/>
</dbReference>
<dbReference type="GO" id="GO:0046920">
    <property type="term" value="F:alpha-(1-&gt;3)-fucosyltransferase activity"/>
    <property type="evidence" value="ECO:0000318"/>
    <property type="project" value="GO_Central"/>
</dbReference>
<dbReference type="GO" id="GO:0008417">
    <property type="term" value="F:fucosyltransferase activity"/>
    <property type="evidence" value="ECO:0000304"/>
    <property type="project" value="ProtInc"/>
</dbReference>
<dbReference type="GO" id="GO:0005975">
    <property type="term" value="P:carbohydrate metabolic process"/>
    <property type="evidence" value="ECO:0000304"/>
    <property type="project" value="ProtInc"/>
</dbReference>
<dbReference type="GO" id="GO:0036065">
    <property type="term" value="P:fucosylation"/>
    <property type="evidence" value="ECO:0000318"/>
    <property type="project" value="GO_Central"/>
</dbReference>
<dbReference type="GO" id="GO:0006688">
    <property type="term" value="P:glycosphingolipid biosynthetic process"/>
    <property type="evidence" value="ECO:0000314"/>
    <property type="project" value="UniProtKB"/>
</dbReference>
<dbReference type="GO" id="GO:0006954">
    <property type="term" value="P:inflammatory response"/>
    <property type="evidence" value="ECO:0007669"/>
    <property type="project" value="UniProtKB-KW"/>
</dbReference>
<dbReference type="GO" id="GO:0042355">
    <property type="term" value="P:L-fucose catabolic process"/>
    <property type="evidence" value="ECO:0000303"/>
    <property type="project" value="UniProtKB"/>
</dbReference>
<dbReference type="GO" id="GO:0106402">
    <property type="term" value="P:Lewis x epitope biosynthetic process"/>
    <property type="evidence" value="ECO:0000314"/>
    <property type="project" value="UniProtKB"/>
</dbReference>
<dbReference type="GO" id="GO:0097022">
    <property type="term" value="P:lymphocyte migration into lymph node"/>
    <property type="evidence" value="ECO:0000250"/>
    <property type="project" value="UniProtKB"/>
</dbReference>
<dbReference type="GO" id="GO:0009312">
    <property type="term" value="P:oligosaccharide biosynthetic process"/>
    <property type="evidence" value="ECO:0000304"/>
    <property type="project" value="Reactome"/>
</dbReference>
<dbReference type="GO" id="GO:0009311">
    <property type="term" value="P:oligosaccharide metabolic process"/>
    <property type="evidence" value="ECO:0000314"/>
    <property type="project" value="UniProtKB"/>
</dbReference>
<dbReference type="GO" id="GO:1903238">
    <property type="term" value="P:positive regulation of leukocyte tethering or rolling"/>
    <property type="evidence" value="ECO:0000250"/>
    <property type="project" value="UniProtKB"/>
</dbReference>
<dbReference type="GO" id="GO:1902624">
    <property type="term" value="P:positive regulation of neutrophil migration"/>
    <property type="evidence" value="ECO:0000250"/>
    <property type="project" value="UniProtKB"/>
</dbReference>
<dbReference type="GO" id="GO:0006486">
    <property type="term" value="P:protein glycosylation"/>
    <property type="evidence" value="ECO:0000304"/>
    <property type="project" value="UniProtKB"/>
</dbReference>
<dbReference type="GO" id="GO:0006487">
    <property type="term" value="P:protein N-linked glycosylation"/>
    <property type="evidence" value="ECO:0000314"/>
    <property type="project" value="UniProtKB"/>
</dbReference>
<dbReference type="GO" id="GO:0006493">
    <property type="term" value="P:protein O-linked glycosylation"/>
    <property type="evidence" value="ECO:0000314"/>
    <property type="project" value="UniProtKB"/>
</dbReference>
<dbReference type="GO" id="GO:1903037">
    <property type="term" value="P:regulation of leukocyte cell-cell adhesion"/>
    <property type="evidence" value="ECO:0000315"/>
    <property type="project" value="UniProtKB"/>
</dbReference>
<dbReference type="FunFam" id="3.40.50.11660:FF:000001">
    <property type="entry name" value="alpha-(1,3)-fucosyltransferase 9"/>
    <property type="match status" value="1"/>
</dbReference>
<dbReference type="Gene3D" id="3.40.50.11660">
    <property type="entry name" value="Glycosyl transferase family 10, C-terminal domain"/>
    <property type="match status" value="1"/>
</dbReference>
<dbReference type="InterPro" id="IPR055270">
    <property type="entry name" value="Glyco_tran_10_C"/>
</dbReference>
<dbReference type="InterPro" id="IPR031481">
    <property type="entry name" value="Glyco_tran_10_N"/>
</dbReference>
<dbReference type="InterPro" id="IPR001503">
    <property type="entry name" value="Glyco_trans_10"/>
</dbReference>
<dbReference type="InterPro" id="IPR038577">
    <property type="entry name" value="GT10-like_C_sf"/>
</dbReference>
<dbReference type="PANTHER" id="PTHR11929">
    <property type="entry name" value="ALPHA- 1,3 -FUCOSYLTRANSFERASE"/>
    <property type="match status" value="1"/>
</dbReference>
<dbReference type="PANTHER" id="PTHR11929:SF132">
    <property type="entry name" value="ALPHA-(1,3)-FUCOSYLTRANSFERASE 4"/>
    <property type="match status" value="1"/>
</dbReference>
<dbReference type="Pfam" id="PF17039">
    <property type="entry name" value="Glyco_tran_10_N"/>
    <property type="match status" value="1"/>
</dbReference>
<dbReference type="Pfam" id="PF00852">
    <property type="entry name" value="Glyco_transf_10"/>
    <property type="match status" value="1"/>
</dbReference>
<dbReference type="SUPFAM" id="SSF53756">
    <property type="entry name" value="UDP-Glycosyltransferase/glycogen phosphorylase"/>
    <property type="match status" value="1"/>
</dbReference>
<accession>P22083</accession>
<accession>B2RMS0</accession>
<feature type="chain" id="PRO_0000221100" description="Alpha-(1,3)-fucosyltransferase 4">
    <location>
        <begin position="1"/>
        <end position="530"/>
    </location>
</feature>
<feature type="topological domain" description="Cytoplasmic" evidence="2">
    <location>
        <begin position="1"/>
        <end position="147"/>
    </location>
</feature>
<feature type="transmembrane region" description="Helical; Signal-anchor for type II membrane protein" evidence="2">
    <location>
        <begin position="148"/>
        <end position="172"/>
    </location>
</feature>
<feature type="topological domain" description="Lumenal" evidence="2">
    <location>
        <begin position="173"/>
        <end position="530"/>
    </location>
</feature>
<feature type="region of interest" description="Disordered" evidence="3">
    <location>
        <begin position="1"/>
        <end position="48"/>
    </location>
</feature>
<feature type="region of interest" description="Disordered" evidence="3">
    <location>
        <begin position="66"/>
        <end position="112"/>
    </location>
</feature>
<feature type="compositionally biased region" description="Basic and acidic residues" evidence="3">
    <location>
        <begin position="88"/>
        <end position="106"/>
    </location>
</feature>
<feature type="glycosylation site" description="N-linked (GlcNAc...) asparagine" evidence="2">
    <location>
        <position position="216"/>
    </location>
</feature>
<feature type="glycosylation site" description="N-linked (GlcNAc...) asparagine" evidence="2">
    <location>
        <position position="315"/>
    </location>
</feature>
<feature type="splice variant" id="VSP_061247" description="In isoform Short." evidence="5">
    <location>
        <begin position="1"/>
        <end position="125"/>
    </location>
</feature>
<feature type="sequence variant" id="VAR_055844" description="In dbSNP:rs2230273.">
    <original>I</original>
    <variation>V</variation>
    <location>
        <position position="255"/>
    </location>
</feature>
<feature type="sequence conflict" description="In Ref. 2; AAA92977." evidence="10" ref="2">
    <original>R</original>
    <variation>P</variation>
    <location>
        <position position="212"/>
    </location>
</feature>
<feature type="sequence conflict" description="In Ref. 6; AAB20349." evidence="10" ref="6">
    <original>E</original>
    <variation>D</variation>
    <location>
        <position position="366"/>
    </location>
</feature>
<organism>
    <name type="scientific">Homo sapiens</name>
    <name type="common">Human</name>
    <dbReference type="NCBI Taxonomy" id="9606"/>
    <lineage>
        <taxon>Eukaryota</taxon>
        <taxon>Metazoa</taxon>
        <taxon>Chordata</taxon>
        <taxon>Craniata</taxon>
        <taxon>Vertebrata</taxon>
        <taxon>Euteleostomi</taxon>
        <taxon>Mammalia</taxon>
        <taxon>Eutheria</taxon>
        <taxon>Euarchontoglires</taxon>
        <taxon>Primates</taxon>
        <taxon>Haplorrhini</taxon>
        <taxon>Catarrhini</taxon>
        <taxon>Hominidae</taxon>
        <taxon>Homo</taxon>
    </lineage>
</organism>
<proteinExistence type="evidence at protein level"/>